<sequence length="99" mass="11313">MGLFMIIAILLFQKPTVTEQLKKCWNNYVQGHCRKICRVNEVPEALCENGRYCCLNIKELEACKKITKPSHPKPATLALTLQDYVTIIENFPSLKTQST</sequence>
<gene>
    <name type="primary">DEFB127</name>
</gene>
<protein>
    <recommendedName>
        <fullName>Beta-defensin 127</fullName>
    </recommendedName>
    <alternativeName>
        <fullName>Defensin, beta 127</fullName>
    </alternativeName>
</protein>
<dbReference type="EMBL" id="DQ012079">
    <property type="protein sequence ID" value="AAY59809.1"/>
    <property type="molecule type" value="mRNA"/>
</dbReference>
<dbReference type="RefSeq" id="NP_001123244.1">
    <property type="nucleotide sequence ID" value="NM_001129772.1"/>
</dbReference>
<dbReference type="SMR" id="Q30KK1"/>
<dbReference type="FunCoup" id="Q30KK1">
    <property type="interactions" value="10"/>
</dbReference>
<dbReference type="STRING" id="9598.ENSPTRP00000022491"/>
<dbReference type="PaxDb" id="9598-ENSPTRP00000022491"/>
<dbReference type="Ensembl" id="ENSPTRT00000024382.3">
    <property type="protein sequence ID" value="ENSPTRP00000022491.2"/>
    <property type="gene ID" value="ENSPTRG00000013136.5"/>
</dbReference>
<dbReference type="GeneID" id="745453"/>
<dbReference type="KEGG" id="ptr:745453"/>
<dbReference type="CTD" id="140850"/>
<dbReference type="VGNC" id="VGNC:13844">
    <property type="gene designation" value="DEFB127"/>
</dbReference>
<dbReference type="eggNOG" id="ENOG502TFAJ">
    <property type="taxonomic scope" value="Eukaryota"/>
</dbReference>
<dbReference type="GeneTree" id="ENSGT00530000064502"/>
<dbReference type="HOGENOM" id="CLU_181906_1_0_1"/>
<dbReference type="InParanoid" id="Q30KK1"/>
<dbReference type="OMA" id="KKCWGEY"/>
<dbReference type="OrthoDB" id="3548at9604"/>
<dbReference type="Proteomes" id="UP000002277">
    <property type="component" value="Chromosome 20"/>
</dbReference>
<dbReference type="GO" id="GO:0005576">
    <property type="term" value="C:extracellular region"/>
    <property type="evidence" value="ECO:0007669"/>
    <property type="project" value="UniProtKB-SubCell"/>
</dbReference>
<dbReference type="GO" id="GO:0061844">
    <property type="term" value="P:antimicrobial humoral immune response mediated by antimicrobial peptide"/>
    <property type="evidence" value="ECO:0007669"/>
    <property type="project" value="Ensembl"/>
</dbReference>
<dbReference type="GO" id="GO:0050829">
    <property type="term" value="P:defense response to Gram-negative bacterium"/>
    <property type="evidence" value="ECO:0007669"/>
    <property type="project" value="Ensembl"/>
</dbReference>
<dbReference type="GO" id="GO:0045087">
    <property type="term" value="P:innate immune response"/>
    <property type="evidence" value="ECO:0007669"/>
    <property type="project" value="InterPro"/>
</dbReference>
<dbReference type="InterPro" id="IPR050544">
    <property type="entry name" value="Beta-defensin"/>
</dbReference>
<dbReference type="InterPro" id="IPR025933">
    <property type="entry name" value="Beta_defensin_dom"/>
</dbReference>
<dbReference type="PANTHER" id="PTHR15001:SF3">
    <property type="entry name" value="BETA-DEFENSIN 123"/>
    <property type="match status" value="1"/>
</dbReference>
<dbReference type="PANTHER" id="PTHR15001">
    <property type="entry name" value="BETA-DEFENSIN 123-RELATED"/>
    <property type="match status" value="1"/>
</dbReference>
<dbReference type="Pfam" id="PF13841">
    <property type="entry name" value="Defensin_beta_2"/>
    <property type="match status" value="1"/>
</dbReference>
<comment type="function">
    <text evidence="3">Has antibacterial activity.</text>
</comment>
<comment type="subcellular location">
    <subcellularLocation>
        <location evidence="3">Secreted</location>
    </subcellularLocation>
</comment>
<comment type="similarity">
    <text evidence="3">Belongs to the beta-defensin family.</text>
</comment>
<organism>
    <name type="scientific">Pan troglodytes</name>
    <name type="common">Chimpanzee</name>
    <dbReference type="NCBI Taxonomy" id="9598"/>
    <lineage>
        <taxon>Eukaryota</taxon>
        <taxon>Metazoa</taxon>
        <taxon>Chordata</taxon>
        <taxon>Craniata</taxon>
        <taxon>Vertebrata</taxon>
        <taxon>Euteleostomi</taxon>
        <taxon>Mammalia</taxon>
        <taxon>Eutheria</taxon>
        <taxon>Euarchontoglires</taxon>
        <taxon>Primates</taxon>
        <taxon>Haplorrhini</taxon>
        <taxon>Catarrhini</taxon>
        <taxon>Hominidae</taxon>
        <taxon>Pan</taxon>
    </lineage>
</organism>
<evidence type="ECO:0000250" key="1"/>
<evidence type="ECO:0000255" key="2"/>
<evidence type="ECO:0000305" key="3"/>
<feature type="signal peptide" evidence="1">
    <location>
        <begin position="1"/>
        <end position="20"/>
    </location>
</feature>
<feature type="peptide" id="PRO_0000045354" description="Beta-defensin 127">
    <location>
        <begin position="21"/>
        <end position="63"/>
    </location>
</feature>
<feature type="propeptide" id="PRO_0000045355" evidence="2">
    <location>
        <begin position="66"/>
        <end position="99"/>
    </location>
</feature>
<feature type="disulfide bond" evidence="1">
    <location>
        <begin position="24"/>
        <end position="53"/>
    </location>
</feature>
<feature type="disulfide bond" evidence="1">
    <location>
        <begin position="33"/>
        <end position="47"/>
    </location>
</feature>
<feature type="disulfide bond" evidence="1">
    <location>
        <begin position="37"/>
        <end position="54"/>
    </location>
</feature>
<proteinExistence type="inferred from homology"/>
<accession>Q30KK1</accession>
<reference key="1">
    <citation type="journal article" date="2005" name="Physiol. Genomics">
        <title>Cross-species analysis of the mammalian beta-defensin gene family: presence of syntenic gene clusters and preferential expression in the male reproductive tract.</title>
        <authorList>
            <person name="Patil A.A."/>
            <person name="Cai Y."/>
            <person name="Sang Y."/>
            <person name="Blecha F."/>
            <person name="Zhang G."/>
        </authorList>
    </citation>
    <scope>NUCLEOTIDE SEQUENCE [MRNA]</scope>
</reference>
<name>DB127_PANTR</name>
<keyword id="KW-0044">Antibiotic</keyword>
<keyword id="KW-0929">Antimicrobial</keyword>
<keyword id="KW-0165">Cleavage on pair of basic residues</keyword>
<keyword id="KW-0211">Defensin</keyword>
<keyword id="KW-1015">Disulfide bond</keyword>
<keyword id="KW-1185">Reference proteome</keyword>
<keyword id="KW-0964">Secreted</keyword>
<keyword id="KW-0732">Signal</keyword>